<proteinExistence type="inferred from homology"/>
<comment type="function">
    <text evidence="1">Catalyzes the 2-thiolation of uridine at the wobble position (U34) of tRNA, leading to the formation of s(2)U34.</text>
</comment>
<comment type="catalytic activity">
    <reaction evidence="1">
        <text>S-sulfanyl-L-cysteinyl-[protein] + uridine(34) in tRNA + AH2 + ATP = 2-thiouridine(34) in tRNA + L-cysteinyl-[protein] + A + AMP + diphosphate + H(+)</text>
        <dbReference type="Rhea" id="RHEA:47032"/>
        <dbReference type="Rhea" id="RHEA-COMP:10131"/>
        <dbReference type="Rhea" id="RHEA-COMP:11726"/>
        <dbReference type="Rhea" id="RHEA-COMP:11727"/>
        <dbReference type="Rhea" id="RHEA-COMP:11728"/>
        <dbReference type="ChEBI" id="CHEBI:13193"/>
        <dbReference type="ChEBI" id="CHEBI:15378"/>
        <dbReference type="ChEBI" id="CHEBI:17499"/>
        <dbReference type="ChEBI" id="CHEBI:29950"/>
        <dbReference type="ChEBI" id="CHEBI:30616"/>
        <dbReference type="ChEBI" id="CHEBI:33019"/>
        <dbReference type="ChEBI" id="CHEBI:61963"/>
        <dbReference type="ChEBI" id="CHEBI:65315"/>
        <dbReference type="ChEBI" id="CHEBI:87170"/>
        <dbReference type="ChEBI" id="CHEBI:456215"/>
        <dbReference type="EC" id="2.8.1.13"/>
    </reaction>
</comment>
<comment type="subcellular location">
    <subcellularLocation>
        <location evidence="1">Cytoplasm</location>
    </subcellularLocation>
</comment>
<comment type="similarity">
    <text evidence="1">Belongs to the MnmA/TRMU family.</text>
</comment>
<gene>
    <name evidence="1" type="primary">mnmA</name>
    <name type="ordered locus">NATL1_17111</name>
</gene>
<dbReference type="EC" id="2.8.1.13" evidence="1"/>
<dbReference type="EMBL" id="CP000553">
    <property type="protein sequence ID" value="ABM76267.1"/>
    <property type="molecule type" value="Genomic_DNA"/>
</dbReference>
<dbReference type="RefSeq" id="WP_011824268.1">
    <property type="nucleotide sequence ID" value="NC_008819.1"/>
</dbReference>
<dbReference type="SMR" id="A2C457"/>
<dbReference type="KEGG" id="pme:NATL1_17111"/>
<dbReference type="eggNOG" id="COG0482">
    <property type="taxonomic scope" value="Bacteria"/>
</dbReference>
<dbReference type="HOGENOM" id="CLU_035188_0_0_3"/>
<dbReference type="Proteomes" id="UP000002592">
    <property type="component" value="Chromosome"/>
</dbReference>
<dbReference type="GO" id="GO:0005737">
    <property type="term" value="C:cytoplasm"/>
    <property type="evidence" value="ECO:0007669"/>
    <property type="project" value="UniProtKB-SubCell"/>
</dbReference>
<dbReference type="GO" id="GO:0005524">
    <property type="term" value="F:ATP binding"/>
    <property type="evidence" value="ECO:0007669"/>
    <property type="project" value="UniProtKB-KW"/>
</dbReference>
<dbReference type="GO" id="GO:0000049">
    <property type="term" value="F:tRNA binding"/>
    <property type="evidence" value="ECO:0007669"/>
    <property type="project" value="UniProtKB-KW"/>
</dbReference>
<dbReference type="GO" id="GO:0103016">
    <property type="term" value="F:tRNA-uridine 2-sulfurtransferase activity"/>
    <property type="evidence" value="ECO:0007669"/>
    <property type="project" value="UniProtKB-EC"/>
</dbReference>
<dbReference type="GO" id="GO:0002143">
    <property type="term" value="P:tRNA wobble position uridine thiolation"/>
    <property type="evidence" value="ECO:0007669"/>
    <property type="project" value="TreeGrafter"/>
</dbReference>
<dbReference type="CDD" id="cd01998">
    <property type="entry name" value="MnmA_TRMU-like"/>
    <property type="match status" value="1"/>
</dbReference>
<dbReference type="FunFam" id="2.30.30.280:FF:000001">
    <property type="entry name" value="tRNA-specific 2-thiouridylase MnmA"/>
    <property type="match status" value="1"/>
</dbReference>
<dbReference type="Gene3D" id="2.30.30.280">
    <property type="entry name" value="Adenine nucleotide alpha hydrolases-like domains"/>
    <property type="match status" value="1"/>
</dbReference>
<dbReference type="Gene3D" id="3.40.50.620">
    <property type="entry name" value="HUPs"/>
    <property type="match status" value="1"/>
</dbReference>
<dbReference type="Gene3D" id="2.40.30.10">
    <property type="entry name" value="Translation factors"/>
    <property type="match status" value="1"/>
</dbReference>
<dbReference type="HAMAP" id="MF_00144">
    <property type="entry name" value="tRNA_thiouridyl_MnmA"/>
    <property type="match status" value="1"/>
</dbReference>
<dbReference type="InterPro" id="IPR004506">
    <property type="entry name" value="MnmA-like"/>
</dbReference>
<dbReference type="InterPro" id="IPR046885">
    <property type="entry name" value="MnmA-like_C"/>
</dbReference>
<dbReference type="InterPro" id="IPR046884">
    <property type="entry name" value="MnmA-like_central"/>
</dbReference>
<dbReference type="InterPro" id="IPR023382">
    <property type="entry name" value="MnmA-like_central_sf"/>
</dbReference>
<dbReference type="InterPro" id="IPR014729">
    <property type="entry name" value="Rossmann-like_a/b/a_fold"/>
</dbReference>
<dbReference type="NCBIfam" id="NF001138">
    <property type="entry name" value="PRK00143.1"/>
    <property type="match status" value="1"/>
</dbReference>
<dbReference type="NCBIfam" id="TIGR00420">
    <property type="entry name" value="trmU"/>
    <property type="match status" value="1"/>
</dbReference>
<dbReference type="PANTHER" id="PTHR11933:SF5">
    <property type="entry name" value="MITOCHONDRIAL TRNA-SPECIFIC 2-THIOURIDYLASE 1"/>
    <property type="match status" value="1"/>
</dbReference>
<dbReference type="PANTHER" id="PTHR11933">
    <property type="entry name" value="TRNA 5-METHYLAMINOMETHYL-2-THIOURIDYLATE -METHYLTRANSFERASE"/>
    <property type="match status" value="1"/>
</dbReference>
<dbReference type="Pfam" id="PF03054">
    <property type="entry name" value="tRNA_Me_trans"/>
    <property type="match status" value="1"/>
</dbReference>
<dbReference type="Pfam" id="PF20258">
    <property type="entry name" value="tRNA_Me_trans_C"/>
    <property type="match status" value="1"/>
</dbReference>
<dbReference type="Pfam" id="PF20259">
    <property type="entry name" value="tRNA_Me_trans_M"/>
    <property type="match status" value="1"/>
</dbReference>
<dbReference type="SUPFAM" id="SSF52402">
    <property type="entry name" value="Adenine nucleotide alpha hydrolases-like"/>
    <property type="match status" value="1"/>
</dbReference>
<sequence length="404" mass="45310">MPMNVETRETKKVLNHLPSEETVEKTLKRLQTFSGDQSVVVGLSGGVDSSLTAALLCKAGWDVEGLTLWLMKGKGSCCSDGLVDAAGICDQLGIKHHIVDSKEIFQKEIINNVLKGYEEGITPLPCSRCNKSVKFSEMLKWVKENKNIEKIATGHYARIRYSNESFNENDLPSNGIKRHKLLRGKDLNKDQSYFLYDLPQEILGRTIFPLGELTKEITRIEALKHSLKTAKKPESQDLCLAEHYGSMNAFIDKYLPQKKGEVVLKSGQIIGSHNGIQHFTIGQRKGLGIAWEVPLHVVEIDASLNRVIVAPREDSGKSECIVKDINWVSIEAPQEPIKVEVQIRYRSKAVKAKLIPIFDSNKENYCYQCHIHFEEDQFSITPGQAAVFYMGDYVLGGGLISKEY</sequence>
<evidence type="ECO:0000255" key="1">
    <source>
        <dbReference type="HAMAP-Rule" id="MF_00144"/>
    </source>
</evidence>
<accession>A2C457</accession>
<name>MNMA_PROM1</name>
<keyword id="KW-0067">ATP-binding</keyword>
<keyword id="KW-0963">Cytoplasm</keyword>
<keyword id="KW-1015">Disulfide bond</keyword>
<keyword id="KW-0547">Nucleotide-binding</keyword>
<keyword id="KW-0694">RNA-binding</keyword>
<keyword id="KW-0808">Transferase</keyword>
<keyword id="KW-0819">tRNA processing</keyword>
<keyword id="KW-0820">tRNA-binding</keyword>
<reference key="1">
    <citation type="journal article" date="2007" name="PLoS Genet.">
        <title>Patterns and implications of gene gain and loss in the evolution of Prochlorococcus.</title>
        <authorList>
            <person name="Kettler G.C."/>
            <person name="Martiny A.C."/>
            <person name="Huang K."/>
            <person name="Zucker J."/>
            <person name="Coleman M.L."/>
            <person name="Rodrigue S."/>
            <person name="Chen F."/>
            <person name="Lapidus A."/>
            <person name="Ferriera S."/>
            <person name="Johnson J."/>
            <person name="Steglich C."/>
            <person name="Church G.M."/>
            <person name="Richardson P."/>
            <person name="Chisholm S.W."/>
        </authorList>
    </citation>
    <scope>NUCLEOTIDE SEQUENCE [LARGE SCALE GENOMIC DNA]</scope>
    <source>
        <strain>NATL1A</strain>
    </source>
</reference>
<feature type="chain" id="PRO_0000349751" description="tRNA-specific 2-thiouridylase MnmA">
    <location>
        <begin position="1"/>
        <end position="404"/>
    </location>
</feature>
<feature type="region of interest" description="Interaction with tRNA" evidence="1">
    <location>
        <begin position="189"/>
        <end position="191"/>
    </location>
</feature>
<feature type="region of interest" description="Interaction with tRNA" evidence="1">
    <location>
        <begin position="344"/>
        <end position="345"/>
    </location>
</feature>
<feature type="active site" description="Nucleophile" evidence="1">
    <location>
        <position position="129"/>
    </location>
</feature>
<feature type="active site" description="Cysteine persulfide intermediate" evidence="1">
    <location>
        <position position="239"/>
    </location>
</feature>
<feature type="binding site" evidence="1">
    <location>
        <begin position="42"/>
        <end position="49"/>
    </location>
    <ligand>
        <name>ATP</name>
        <dbReference type="ChEBI" id="CHEBI:30616"/>
    </ligand>
</feature>
<feature type="binding site" evidence="1">
    <location>
        <position position="68"/>
    </location>
    <ligand>
        <name>ATP</name>
        <dbReference type="ChEBI" id="CHEBI:30616"/>
    </ligand>
</feature>
<feature type="binding site" evidence="1">
    <location>
        <position position="154"/>
    </location>
    <ligand>
        <name>ATP</name>
        <dbReference type="ChEBI" id="CHEBI:30616"/>
    </ligand>
</feature>
<feature type="site" description="Interaction with tRNA" evidence="1">
    <location>
        <position position="155"/>
    </location>
</feature>
<feature type="site" description="Interaction with tRNA" evidence="1">
    <location>
        <position position="384"/>
    </location>
</feature>
<feature type="disulfide bond" description="Alternate" evidence="1">
    <location>
        <begin position="129"/>
        <end position="239"/>
    </location>
</feature>
<organism>
    <name type="scientific">Prochlorococcus marinus (strain NATL1A)</name>
    <dbReference type="NCBI Taxonomy" id="167555"/>
    <lineage>
        <taxon>Bacteria</taxon>
        <taxon>Bacillati</taxon>
        <taxon>Cyanobacteriota</taxon>
        <taxon>Cyanophyceae</taxon>
        <taxon>Synechococcales</taxon>
        <taxon>Prochlorococcaceae</taxon>
        <taxon>Prochlorococcus</taxon>
    </lineage>
</organism>
<protein>
    <recommendedName>
        <fullName evidence="1">tRNA-specific 2-thiouridylase MnmA</fullName>
        <ecNumber evidence="1">2.8.1.13</ecNumber>
    </recommendedName>
</protein>